<sequence length="823" mass="94106">MDNTYNPQEVEEQAQQYWHKKQSFNVTEDLNKEKFYCLSMFPYPSGTLHMGHVRNYTLGDVIARYQRALGKNVLQPIGWDAFGLPAENAAIKNKIPPAEWTRKNIAAMKEQFLRLGNAYDWKREITTCDPEYYRWEQWFFIRLFEKGLVYKKNAVVNWDPVDQTVLANEQVVDGRGWRSGALVERKEISQWFIKITSYADELLSSLDSLDEWPAQVKQMQRNWIGKSIGTEIYFNVNNYPKRLKIYTTRPDTLMGATYLAVATDHPLAKEAASNNKKVQEFLDSCQGIKIAEAELATMEKRGIDTGMTAIHPITGKELPIWVANFVLMQYGSGAVMAVPAHDQRDWEFAQKYQLPVKQVIKPIDIEHDFNQSAYTEEGILINSNQFDNLLSSKAIQVITNFLEENDAGKATINYRLRDWGVSRQRYWGTPIPMIICEQCGIVPVPDEELPVVLPENVDFTGTGSPLTQCKEFVNVTCPKCGQDATRETDTFDTFVESSWYYARFACKGQENAMLDDRAKYWTPVDQYIGGIEHAVMHLLYARFFHKLMRDEGLVNSDEPFKALLTQGMVLKDGHKMSKSLGNVVDPNHLINTYGADTARLFVMFASPPEQSLEWSDSGVEGAHRFLKRVWAFSHQHRDMLIDINDSILSGNGHVDWKEAESRLKKSRHIVHQILAQATHDYDRNQFNTVVSGCMKLFNEISDYSIETENDKFFIHSSISILLRLLAPITPHICHCLWQQLGFDKAIIDAPWPKVDKSALKTDEVDYVVQVNGKLRAQFTASTDATEEELIAAAKEHAHNFVVNHTIKKAIIVPHRQLINLVIG</sequence>
<reference key="1">
    <citation type="journal article" date="2004" name="Science">
        <title>The genomic sequence of the accidental pathogen Legionella pneumophila.</title>
        <authorList>
            <person name="Chien M."/>
            <person name="Morozova I."/>
            <person name="Shi S."/>
            <person name="Sheng H."/>
            <person name="Chen J."/>
            <person name="Gomez S.M."/>
            <person name="Asamani G."/>
            <person name="Hill K."/>
            <person name="Nuara J."/>
            <person name="Feder M."/>
            <person name="Rineer J."/>
            <person name="Greenberg J.J."/>
            <person name="Steshenko V."/>
            <person name="Park S.H."/>
            <person name="Zhao B."/>
            <person name="Teplitskaya E."/>
            <person name="Edwards J.R."/>
            <person name="Pampou S."/>
            <person name="Georghiou A."/>
            <person name="Chou I.-C."/>
            <person name="Iannuccilli W."/>
            <person name="Ulz M.E."/>
            <person name="Kim D.H."/>
            <person name="Geringer-Sameth A."/>
            <person name="Goldsberry C."/>
            <person name="Morozov P."/>
            <person name="Fischer S.G."/>
            <person name="Segal G."/>
            <person name="Qu X."/>
            <person name="Rzhetsky A."/>
            <person name="Zhang P."/>
            <person name="Cayanis E."/>
            <person name="De Jong P.J."/>
            <person name="Ju J."/>
            <person name="Kalachikov S."/>
            <person name="Shuman H.A."/>
            <person name="Russo J.J."/>
        </authorList>
    </citation>
    <scope>NUCLEOTIDE SEQUENCE [LARGE SCALE GENOMIC DNA]</scope>
    <source>
        <strain>Philadelphia 1 / ATCC 33152 / DSM 7513</strain>
    </source>
</reference>
<dbReference type="EC" id="6.1.1.4" evidence="1"/>
<dbReference type="EMBL" id="AE017354">
    <property type="protein sequence ID" value="AAU27430.1"/>
    <property type="molecule type" value="Genomic_DNA"/>
</dbReference>
<dbReference type="RefSeq" id="WP_010947078.1">
    <property type="nucleotide sequence ID" value="NC_002942.5"/>
</dbReference>
<dbReference type="RefSeq" id="YP_095377.1">
    <property type="nucleotide sequence ID" value="NC_002942.5"/>
</dbReference>
<dbReference type="SMR" id="Q5ZVU2"/>
<dbReference type="STRING" id="272624.lpg1348"/>
<dbReference type="PaxDb" id="272624-lpg1348"/>
<dbReference type="GeneID" id="57035338"/>
<dbReference type="KEGG" id="lpn:lpg1348"/>
<dbReference type="PATRIC" id="fig|272624.6.peg.1418"/>
<dbReference type="eggNOG" id="COG0495">
    <property type="taxonomic scope" value="Bacteria"/>
</dbReference>
<dbReference type="HOGENOM" id="CLU_004427_0_0_6"/>
<dbReference type="OrthoDB" id="9810365at2"/>
<dbReference type="Proteomes" id="UP000000609">
    <property type="component" value="Chromosome"/>
</dbReference>
<dbReference type="GO" id="GO:0005829">
    <property type="term" value="C:cytosol"/>
    <property type="evidence" value="ECO:0007669"/>
    <property type="project" value="TreeGrafter"/>
</dbReference>
<dbReference type="GO" id="GO:0002161">
    <property type="term" value="F:aminoacyl-tRNA deacylase activity"/>
    <property type="evidence" value="ECO:0007669"/>
    <property type="project" value="InterPro"/>
</dbReference>
<dbReference type="GO" id="GO:0005524">
    <property type="term" value="F:ATP binding"/>
    <property type="evidence" value="ECO:0007669"/>
    <property type="project" value="UniProtKB-UniRule"/>
</dbReference>
<dbReference type="GO" id="GO:0004823">
    <property type="term" value="F:leucine-tRNA ligase activity"/>
    <property type="evidence" value="ECO:0007669"/>
    <property type="project" value="UniProtKB-UniRule"/>
</dbReference>
<dbReference type="GO" id="GO:0006429">
    <property type="term" value="P:leucyl-tRNA aminoacylation"/>
    <property type="evidence" value="ECO:0007669"/>
    <property type="project" value="UniProtKB-UniRule"/>
</dbReference>
<dbReference type="CDD" id="cd07958">
    <property type="entry name" value="Anticodon_Ia_Leu_BEm"/>
    <property type="match status" value="1"/>
</dbReference>
<dbReference type="CDD" id="cd00812">
    <property type="entry name" value="LeuRS_core"/>
    <property type="match status" value="1"/>
</dbReference>
<dbReference type="FunFam" id="1.10.730.10:FF:000003">
    <property type="entry name" value="Leucine--tRNA ligase"/>
    <property type="match status" value="1"/>
</dbReference>
<dbReference type="FunFam" id="3.40.50.620:FF:000056">
    <property type="entry name" value="Leucine--tRNA ligase"/>
    <property type="match status" value="1"/>
</dbReference>
<dbReference type="FunFam" id="3.40.50.620:FF:000395">
    <property type="entry name" value="Leucine--tRNA ligase"/>
    <property type="match status" value="1"/>
</dbReference>
<dbReference type="FunFam" id="3.90.740.10:FF:000012">
    <property type="entry name" value="Leucine--tRNA ligase"/>
    <property type="match status" value="1"/>
</dbReference>
<dbReference type="Gene3D" id="3.10.20.590">
    <property type="match status" value="1"/>
</dbReference>
<dbReference type="Gene3D" id="3.40.50.620">
    <property type="entry name" value="HUPs"/>
    <property type="match status" value="2"/>
</dbReference>
<dbReference type="Gene3D" id="1.10.730.10">
    <property type="entry name" value="Isoleucyl-tRNA Synthetase, Domain 1"/>
    <property type="match status" value="1"/>
</dbReference>
<dbReference type="HAMAP" id="MF_00049_B">
    <property type="entry name" value="Leu_tRNA_synth_B"/>
    <property type="match status" value="1"/>
</dbReference>
<dbReference type="InterPro" id="IPR001412">
    <property type="entry name" value="aa-tRNA-synth_I_CS"/>
</dbReference>
<dbReference type="InterPro" id="IPR002300">
    <property type="entry name" value="aa-tRNA-synth_Ia"/>
</dbReference>
<dbReference type="InterPro" id="IPR002302">
    <property type="entry name" value="Leu-tRNA-ligase"/>
</dbReference>
<dbReference type="InterPro" id="IPR025709">
    <property type="entry name" value="Leu_tRNA-synth_edit"/>
</dbReference>
<dbReference type="InterPro" id="IPR013155">
    <property type="entry name" value="M/V/L/I-tRNA-synth_anticd-bd"/>
</dbReference>
<dbReference type="InterPro" id="IPR015413">
    <property type="entry name" value="Methionyl/Leucyl_tRNA_Synth"/>
</dbReference>
<dbReference type="InterPro" id="IPR014729">
    <property type="entry name" value="Rossmann-like_a/b/a_fold"/>
</dbReference>
<dbReference type="InterPro" id="IPR009080">
    <property type="entry name" value="tRNAsynth_Ia_anticodon-bd"/>
</dbReference>
<dbReference type="InterPro" id="IPR009008">
    <property type="entry name" value="Val/Leu/Ile-tRNA-synth_edit"/>
</dbReference>
<dbReference type="NCBIfam" id="TIGR00396">
    <property type="entry name" value="leuS_bact"/>
    <property type="match status" value="1"/>
</dbReference>
<dbReference type="PANTHER" id="PTHR43740:SF2">
    <property type="entry name" value="LEUCINE--TRNA LIGASE, MITOCHONDRIAL"/>
    <property type="match status" value="1"/>
</dbReference>
<dbReference type="PANTHER" id="PTHR43740">
    <property type="entry name" value="LEUCYL-TRNA SYNTHETASE"/>
    <property type="match status" value="1"/>
</dbReference>
<dbReference type="Pfam" id="PF08264">
    <property type="entry name" value="Anticodon_1"/>
    <property type="match status" value="1"/>
</dbReference>
<dbReference type="Pfam" id="PF00133">
    <property type="entry name" value="tRNA-synt_1"/>
    <property type="match status" value="1"/>
</dbReference>
<dbReference type="Pfam" id="PF13603">
    <property type="entry name" value="tRNA-synt_1_2"/>
    <property type="match status" value="1"/>
</dbReference>
<dbReference type="Pfam" id="PF09334">
    <property type="entry name" value="tRNA-synt_1g"/>
    <property type="match status" value="1"/>
</dbReference>
<dbReference type="PRINTS" id="PR00985">
    <property type="entry name" value="TRNASYNTHLEU"/>
</dbReference>
<dbReference type="SUPFAM" id="SSF47323">
    <property type="entry name" value="Anticodon-binding domain of a subclass of class I aminoacyl-tRNA synthetases"/>
    <property type="match status" value="1"/>
</dbReference>
<dbReference type="SUPFAM" id="SSF52374">
    <property type="entry name" value="Nucleotidylyl transferase"/>
    <property type="match status" value="1"/>
</dbReference>
<dbReference type="SUPFAM" id="SSF50677">
    <property type="entry name" value="ValRS/IleRS/LeuRS editing domain"/>
    <property type="match status" value="1"/>
</dbReference>
<dbReference type="PROSITE" id="PS00178">
    <property type="entry name" value="AA_TRNA_LIGASE_I"/>
    <property type="match status" value="1"/>
</dbReference>
<name>SYL_LEGPH</name>
<feature type="chain" id="PRO_0000152032" description="Leucine--tRNA ligase">
    <location>
        <begin position="1"/>
        <end position="823"/>
    </location>
</feature>
<feature type="short sequence motif" description="'HIGH' region">
    <location>
        <begin position="42"/>
        <end position="52"/>
    </location>
</feature>
<feature type="short sequence motif" description="'KMSKS' region">
    <location>
        <begin position="575"/>
        <end position="579"/>
    </location>
</feature>
<feature type="binding site" evidence="1">
    <location>
        <position position="578"/>
    </location>
    <ligand>
        <name>ATP</name>
        <dbReference type="ChEBI" id="CHEBI:30616"/>
    </ligand>
</feature>
<proteinExistence type="inferred from homology"/>
<comment type="catalytic activity">
    <reaction evidence="1">
        <text>tRNA(Leu) + L-leucine + ATP = L-leucyl-tRNA(Leu) + AMP + diphosphate</text>
        <dbReference type="Rhea" id="RHEA:11688"/>
        <dbReference type="Rhea" id="RHEA-COMP:9613"/>
        <dbReference type="Rhea" id="RHEA-COMP:9622"/>
        <dbReference type="ChEBI" id="CHEBI:30616"/>
        <dbReference type="ChEBI" id="CHEBI:33019"/>
        <dbReference type="ChEBI" id="CHEBI:57427"/>
        <dbReference type="ChEBI" id="CHEBI:78442"/>
        <dbReference type="ChEBI" id="CHEBI:78494"/>
        <dbReference type="ChEBI" id="CHEBI:456215"/>
        <dbReference type="EC" id="6.1.1.4"/>
    </reaction>
</comment>
<comment type="subcellular location">
    <subcellularLocation>
        <location evidence="1">Cytoplasm</location>
    </subcellularLocation>
</comment>
<comment type="similarity">
    <text evidence="1">Belongs to the class-I aminoacyl-tRNA synthetase family.</text>
</comment>
<accession>Q5ZVU2</accession>
<organism>
    <name type="scientific">Legionella pneumophila subsp. pneumophila (strain Philadelphia 1 / ATCC 33152 / DSM 7513)</name>
    <dbReference type="NCBI Taxonomy" id="272624"/>
    <lineage>
        <taxon>Bacteria</taxon>
        <taxon>Pseudomonadati</taxon>
        <taxon>Pseudomonadota</taxon>
        <taxon>Gammaproteobacteria</taxon>
        <taxon>Legionellales</taxon>
        <taxon>Legionellaceae</taxon>
        <taxon>Legionella</taxon>
    </lineage>
</organism>
<evidence type="ECO:0000255" key="1">
    <source>
        <dbReference type="HAMAP-Rule" id="MF_00049"/>
    </source>
</evidence>
<keyword id="KW-0030">Aminoacyl-tRNA synthetase</keyword>
<keyword id="KW-0067">ATP-binding</keyword>
<keyword id="KW-0963">Cytoplasm</keyword>
<keyword id="KW-0436">Ligase</keyword>
<keyword id="KW-0547">Nucleotide-binding</keyword>
<keyword id="KW-0648">Protein biosynthesis</keyword>
<keyword id="KW-1185">Reference proteome</keyword>
<gene>
    <name evidence="1" type="primary">leuS</name>
    <name type="ordered locus">lpg1348</name>
</gene>
<protein>
    <recommendedName>
        <fullName evidence="1">Leucine--tRNA ligase</fullName>
        <ecNumber evidence="1">6.1.1.4</ecNumber>
    </recommendedName>
    <alternativeName>
        <fullName evidence="1">Leucyl-tRNA synthetase</fullName>
        <shortName evidence="1">LeuRS</shortName>
    </alternativeName>
</protein>